<comment type="function">
    <text evidence="1">F(1)F(0) ATP synthase produces ATP from ADP in the presence of a proton or sodium gradient. F-type ATPases consist of two structural domains, F(1) containing the extramembraneous catalytic core and F(0) containing the membrane proton channel, linked together by a central stalk and a peripheral stalk. During catalysis, ATP synthesis in the catalytic domain of F(1) is coupled via a rotary mechanism of the central stalk subunits to proton translocation.</text>
</comment>
<comment type="function">
    <text evidence="1">Component of the F(0) channel, it forms part of the peripheral stalk, linking F(1) to F(0).</text>
</comment>
<comment type="subunit">
    <text evidence="1">F-type ATPases have 2 components, F(1) - the catalytic core - and F(0) - the membrane proton channel. F(1) has five subunits: alpha(3), beta(3), gamma(1), delta(1), epsilon(1). F(0) has three main subunits: a(1), b(2) and c(10-14). The alpha and beta chains form an alternating ring which encloses part of the gamma chain. F(1) is attached to F(0) by a central stalk formed by the gamma and epsilon chains, while a peripheral stalk is formed by the delta and b chains.</text>
</comment>
<comment type="subcellular location">
    <subcellularLocation>
        <location evidence="1">Cell inner membrane</location>
        <topology evidence="1">Single-pass membrane protein</topology>
    </subcellularLocation>
</comment>
<comment type="similarity">
    <text evidence="1">Belongs to the ATPase B chain family.</text>
</comment>
<protein>
    <recommendedName>
        <fullName evidence="1">ATP synthase subunit b</fullName>
    </recommendedName>
    <alternativeName>
        <fullName evidence="1">ATP synthase F(0) sector subunit b</fullName>
    </alternativeName>
    <alternativeName>
        <fullName evidence="1">ATPase subunit I</fullName>
    </alternativeName>
    <alternativeName>
        <fullName evidence="1">F-type ATPase subunit b</fullName>
        <shortName evidence="1">F-ATPase subunit b</shortName>
    </alternativeName>
</protein>
<name>ATPF_SALA4</name>
<organism>
    <name type="scientific">Salmonella agona (strain SL483)</name>
    <dbReference type="NCBI Taxonomy" id="454166"/>
    <lineage>
        <taxon>Bacteria</taxon>
        <taxon>Pseudomonadati</taxon>
        <taxon>Pseudomonadota</taxon>
        <taxon>Gammaproteobacteria</taxon>
        <taxon>Enterobacterales</taxon>
        <taxon>Enterobacteriaceae</taxon>
        <taxon>Salmonella</taxon>
    </lineage>
</organism>
<sequence length="156" mass="17365">MNLNATILGQAIAFILFVWFCMKYVWPPLMAAIEKRQKEIADGLASAERAHKDLDLAKASATDQLKKAKAEAQVIIEQANKRRAQILDEAKTEAEQERTKIVAQAQAEIEAERKRAREELRKQVAILAVAGAEKIIERSVDEAANSDIVDKLVAEL</sequence>
<proteinExistence type="inferred from homology"/>
<reference key="1">
    <citation type="journal article" date="2011" name="J. Bacteriol.">
        <title>Comparative genomics of 28 Salmonella enterica isolates: evidence for CRISPR-mediated adaptive sublineage evolution.</title>
        <authorList>
            <person name="Fricke W.F."/>
            <person name="Mammel M.K."/>
            <person name="McDermott P.F."/>
            <person name="Tartera C."/>
            <person name="White D.G."/>
            <person name="Leclerc J.E."/>
            <person name="Ravel J."/>
            <person name="Cebula T.A."/>
        </authorList>
    </citation>
    <scope>NUCLEOTIDE SEQUENCE [LARGE SCALE GENOMIC DNA]</scope>
    <source>
        <strain>SL483</strain>
    </source>
</reference>
<accession>B5EZ00</accession>
<dbReference type="EMBL" id="CP001138">
    <property type="protein sequence ID" value="ACH49923.1"/>
    <property type="molecule type" value="Genomic_DNA"/>
</dbReference>
<dbReference type="RefSeq" id="WP_001052212.1">
    <property type="nucleotide sequence ID" value="NC_011149.1"/>
</dbReference>
<dbReference type="SMR" id="B5EZ00"/>
<dbReference type="GeneID" id="66758158"/>
<dbReference type="KEGG" id="sea:SeAg_B4094"/>
<dbReference type="HOGENOM" id="CLU_079215_4_5_6"/>
<dbReference type="Proteomes" id="UP000008819">
    <property type="component" value="Chromosome"/>
</dbReference>
<dbReference type="GO" id="GO:0005886">
    <property type="term" value="C:plasma membrane"/>
    <property type="evidence" value="ECO:0007669"/>
    <property type="project" value="UniProtKB-SubCell"/>
</dbReference>
<dbReference type="GO" id="GO:0045259">
    <property type="term" value="C:proton-transporting ATP synthase complex"/>
    <property type="evidence" value="ECO:0007669"/>
    <property type="project" value="UniProtKB-KW"/>
</dbReference>
<dbReference type="GO" id="GO:0046933">
    <property type="term" value="F:proton-transporting ATP synthase activity, rotational mechanism"/>
    <property type="evidence" value="ECO:0007669"/>
    <property type="project" value="UniProtKB-UniRule"/>
</dbReference>
<dbReference type="GO" id="GO:0046961">
    <property type="term" value="F:proton-transporting ATPase activity, rotational mechanism"/>
    <property type="evidence" value="ECO:0007669"/>
    <property type="project" value="TreeGrafter"/>
</dbReference>
<dbReference type="CDD" id="cd06503">
    <property type="entry name" value="ATP-synt_Fo_b"/>
    <property type="match status" value="1"/>
</dbReference>
<dbReference type="FunFam" id="1.20.5.620:FF:000001">
    <property type="entry name" value="ATP synthase subunit b"/>
    <property type="match status" value="1"/>
</dbReference>
<dbReference type="Gene3D" id="1.20.5.620">
    <property type="entry name" value="F1F0 ATP synthase subunit B, membrane domain"/>
    <property type="match status" value="1"/>
</dbReference>
<dbReference type="HAMAP" id="MF_01398">
    <property type="entry name" value="ATP_synth_b_bprime"/>
    <property type="match status" value="1"/>
</dbReference>
<dbReference type="InterPro" id="IPR028987">
    <property type="entry name" value="ATP_synth_B-like_membr_sf"/>
</dbReference>
<dbReference type="InterPro" id="IPR002146">
    <property type="entry name" value="ATP_synth_b/b'su_bac/chlpt"/>
</dbReference>
<dbReference type="InterPro" id="IPR005864">
    <property type="entry name" value="ATP_synth_F0_bsu_bac"/>
</dbReference>
<dbReference type="InterPro" id="IPR050059">
    <property type="entry name" value="ATP_synthase_B_chain"/>
</dbReference>
<dbReference type="NCBIfam" id="TIGR01144">
    <property type="entry name" value="ATP_synt_b"/>
    <property type="match status" value="1"/>
</dbReference>
<dbReference type="NCBIfam" id="NF004411">
    <property type="entry name" value="PRK05759.1-2"/>
    <property type="match status" value="1"/>
</dbReference>
<dbReference type="NCBIfam" id="NF004413">
    <property type="entry name" value="PRK05759.1-4"/>
    <property type="match status" value="1"/>
</dbReference>
<dbReference type="PANTHER" id="PTHR33445:SF1">
    <property type="entry name" value="ATP SYNTHASE SUBUNIT B"/>
    <property type="match status" value="1"/>
</dbReference>
<dbReference type="PANTHER" id="PTHR33445">
    <property type="entry name" value="ATP SYNTHASE SUBUNIT B', CHLOROPLASTIC"/>
    <property type="match status" value="1"/>
</dbReference>
<dbReference type="Pfam" id="PF00430">
    <property type="entry name" value="ATP-synt_B"/>
    <property type="match status" value="1"/>
</dbReference>
<dbReference type="SUPFAM" id="SSF81573">
    <property type="entry name" value="F1F0 ATP synthase subunit B, membrane domain"/>
    <property type="match status" value="1"/>
</dbReference>
<evidence type="ECO:0000255" key="1">
    <source>
        <dbReference type="HAMAP-Rule" id="MF_01398"/>
    </source>
</evidence>
<keyword id="KW-0066">ATP synthesis</keyword>
<keyword id="KW-0997">Cell inner membrane</keyword>
<keyword id="KW-1003">Cell membrane</keyword>
<keyword id="KW-0138">CF(0)</keyword>
<keyword id="KW-0375">Hydrogen ion transport</keyword>
<keyword id="KW-0406">Ion transport</keyword>
<keyword id="KW-0472">Membrane</keyword>
<keyword id="KW-0812">Transmembrane</keyword>
<keyword id="KW-1133">Transmembrane helix</keyword>
<keyword id="KW-0813">Transport</keyword>
<gene>
    <name evidence="1" type="primary">atpF</name>
    <name type="ordered locus">SeAg_B4094</name>
</gene>
<feature type="chain" id="PRO_0000368739" description="ATP synthase subunit b">
    <location>
        <begin position="1"/>
        <end position="156"/>
    </location>
</feature>
<feature type="transmembrane region" description="Helical" evidence="1">
    <location>
        <begin position="11"/>
        <end position="31"/>
    </location>
</feature>